<organism>
    <name type="scientific">Burkholderia ambifaria (strain ATCC BAA-244 / DSM 16087 / CCUG 44356 / LMG 19182 / AMMD)</name>
    <name type="common">Burkholderia cepacia (strain AMMD)</name>
    <dbReference type="NCBI Taxonomy" id="339670"/>
    <lineage>
        <taxon>Bacteria</taxon>
        <taxon>Pseudomonadati</taxon>
        <taxon>Pseudomonadota</taxon>
        <taxon>Betaproteobacteria</taxon>
        <taxon>Burkholderiales</taxon>
        <taxon>Burkholderiaceae</taxon>
        <taxon>Burkholderia</taxon>
        <taxon>Burkholderia cepacia complex</taxon>
    </lineage>
</organism>
<gene>
    <name evidence="1" type="primary">hslV</name>
    <name type="ordered locus">Bamb_3138</name>
</gene>
<comment type="function">
    <text evidence="1">Protease subunit of a proteasome-like degradation complex believed to be a general protein degrading machinery.</text>
</comment>
<comment type="catalytic activity">
    <reaction evidence="1">
        <text>ATP-dependent cleavage of peptide bonds with broad specificity.</text>
        <dbReference type="EC" id="3.4.25.2"/>
    </reaction>
</comment>
<comment type="activity regulation">
    <text evidence="1">Allosterically activated by HslU binding.</text>
</comment>
<comment type="subunit">
    <text evidence="1">A double ring-shaped homohexamer of HslV is capped on each side by a ring-shaped HslU homohexamer. The assembly of the HslU/HslV complex is dependent on binding of ATP.</text>
</comment>
<comment type="subcellular location">
    <subcellularLocation>
        <location evidence="1">Cytoplasm</location>
    </subcellularLocation>
</comment>
<comment type="similarity">
    <text evidence="1">Belongs to the peptidase T1B family. HslV subfamily.</text>
</comment>
<reference key="1">
    <citation type="submission" date="2006-08" db="EMBL/GenBank/DDBJ databases">
        <title>Complete sequence of chromosome 1 of Burkholderia cepacia AMMD.</title>
        <authorList>
            <person name="Copeland A."/>
            <person name="Lucas S."/>
            <person name="Lapidus A."/>
            <person name="Barry K."/>
            <person name="Detter J.C."/>
            <person name="Glavina del Rio T."/>
            <person name="Hammon N."/>
            <person name="Israni S."/>
            <person name="Pitluck S."/>
            <person name="Bruce D."/>
            <person name="Chain P."/>
            <person name="Malfatti S."/>
            <person name="Shin M."/>
            <person name="Vergez L."/>
            <person name="Schmutz J."/>
            <person name="Larimer F."/>
            <person name="Land M."/>
            <person name="Hauser L."/>
            <person name="Kyrpides N."/>
            <person name="Kim E."/>
            <person name="Parke J."/>
            <person name="Coenye T."/>
            <person name="Konstantinidis K."/>
            <person name="Ramette A."/>
            <person name="Tiedje J."/>
            <person name="Richardson P."/>
        </authorList>
    </citation>
    <scope>NUCLEOTIDE SEQUENCE [LARGE SCALE GENOMIC DNA]</scope>
    <source>
        <strain>ATCC BAA-244 / DSM 16087 / CCUG 44356 / LMG 19182 / AMMD</strain>
    </source>
</reference>
<proteinExistence type="inferred from homology"/>
<dbReference type="EC" id="3.4.25.2" evidence="1"/>
<dbReference type="EMBL" id="CP000440">
    <property type="protein sequence ID" value="ABI88694.1"/>
    <property type="molecule type" value="Genomic_DNA"/>
</dbReference>
<dbReference type="RefSeq" id="WP_011658198.1">
    <property type="nucleotide sequence ID" value="NZ_CP009798.1"/>
</dbReference>
<dbReference type="SMR" id="Q0BAX9"/>
<dbReference type="MEROPS" id="T01.006"/>
<dbReference type="GeneID" id="93084666"/>
<dbReference type="KEGG" id="bam:Bamb_3138"/>
<dbReference type="PATRIC" id="fig|339670.21.peg.1721"/>
<dbReference type="eggNOG" id="COG5405">
    <property type="taxonomic scope" value="Bacteria"/>
</dbReference>
<dbReference type="Proteomes" id="UP000000662">
    <property type="component" value="Chromosome 1"/>
</dbReference>
<dbReference type="GO" id="GO:0009376">
    <property type="term" value="C:HslUV protease complex"/>
    <property type="evidence" value="ECO:0007669"/>
    <property type="project" value="UniProtKB-UniRule"/>
</dbReference>
<dbReference type="GO" id="GO:0005839">
    <property type="term" value="C:proteasome core complex"/>
    <property type="evidence" value="ECO:0007669"/>
    <property type="project" value="InterPro"/>
</dbReference>
<dbReference type="GO" id="GO:0046872">
    <property type="term" value="F:metal ion binding"/>
    <property type="evidence" value="ECO:0007669"/>
    <property type="project" value="UniProtKB-KW"/>
</dbReference>
<dbReference type="GO" id="GO:0004298">
    <property type="term" value="F:threonine-type endopeptidase activity"/>
    <property type="evidence" value="ECO:0007669"/>
    <property type="project" value="UniProtKB-KW"/>
</dbReference>
<dbReference type="GO" id="GO:0051603">
    <property type="term" value="P:proteolysis involved in protein catabolic process"/>
    <property type="evidence" value="ECO:0007669"/>
    <property type="project" value="InterPro"/>
</dbReference>
<dbReference type="CDD" id="cd01913">
    <property type="entry name" value="protease_HslV"/>
    <property type="match status" value="1"/>
</dbReference>
<dbReference type="FunFam" id="3.60.20.10:FF:000002">
    <property type="entry name" value="ATP-dependent protease subunit HslV"/>
    <property type="match status" value="1"/>
</dbReference>
<dbReference type="Gene3D" id="3.60.20.10">
    <property type="entry name" value="Glutamine Phosphoribosylpyrophosphate, subunit 1, domain 1"/>
    <property type="match status" value="1"/>
</dbReference>
<dbReference type="HAMAP" id="MF_00248">
    <property type="entry name" value="HslV"/>
    <property type="match status" value="1"/>
</dbReference>
<dbReference type="InterPro" id="IPR022281">
    <property type="entry name" value="ATP-dep_Prtase_HsIV_su"/>
</dbReference>
<dbReference type="InterPro" id="IPR029055">
    <property type="entry name" value="Ntn_hydrolases_N"/>
</dbReference>
<dbReference type="InterPro" id="IPR001353">
    <property type="entry name" value="Proteasome_sua/b"/>
</dbReference>
<dbReference type="InterPro" id="IPR023333">
    <property type="entry name" value="Proteasome_suB-type"/>
</dbReference>
<dbReference type="NCBIfam" id="TIGR03692">
    <property type="entry name" value="ATP_dep_HslV"/>
    <property type="match status" value="1"/>
</dbReference>
<dbReference type="NCBIfam" id="NF003964">
    <property type="entry name" value="PRK05456.1"/>
    <property type="match status" value="1"/>
</dbReference>
<dbReference type="PANTHER" id="PTHR32194:SF0">
    <property type="entry name" value="ATP-DEPENDENT PROTEASE SUBUNIT HSLV"/>
    <property type="match status" value="1"/>
</dbReference>
<dbReference type="PANTHER" id="PTHR32194">
    <property type="entry name" value="METALLOPROTEASE TLDD"/>
    <property type="match status" value="1"/>
</dbReference>
<dbReference type="Pfam" id="PF00227">
    <property type="entry name" value="Proteasome"/>
    <property type="match status" value="1"/>
</dbReference>
<dbReference type="PIRSF" id="PIRSF039093">
    <property type="entry name" value="HslV"/>
    <property type="match status" value="1"/>
</dbReference>
<dbReference type="SUPFAM" id="SSF56235">
    <property type="entry name" value="N-terminal nucleophile aminohydrolases (Ntn hydrolases)"/>
    <property type="match status" value="1"/>
</dbReference>
<dbReference type="PROSITE" id="PS51476">
    <property type="entry name" value="PROTEASOME_BETA_2"/>
    <property type="match status" value="1"/>
</dbReference>
<protein>
    <recommendedName>
        <fullName evidence="1">ATP-dependent protease subunit HslV</fullName>
        <ecNumber evidence="1">3.4.25.2</ecNumber>
    </recommendedName>
</protein>
<keyword id="KW-0021">Allosteric enzyme</keyword>
<keyword id="KW-0963">Cytoplasm</keyword>
<keyword id="KW-0378">Hydrolase</keyword>
<keyword id="KW-0479">Metal-binding</keyword>
<keyword id="KW-0645">Protease</keyword>
<keyword id="KW-0915">Sodium</keyword>
<keyword id="KW-0888">Threonine protease</keyword>
<feature type="chain" id="PRO_1000012591" description="ATP-dependent protease subunit HslV">
    <location>
        <begin position="1"/>
        <end position="178"/>
    </location>
</feature>
<feature type="active site" evidence="1">
    <location>
        <position position="7"/>
    </location>
</feature>
<feature type="binding site" evidence="1">
    <location>
        <position position="162"/>
    </location>
    <ligand>
        <name>Na(+)</name>
        <dbReference type="ChEBI" id="CHEBI:29101"/>
    </ligand>
</feature>
<feature type="binding site" evidence="1">
    <location>
        <position position="165"/>
    </location>
    <ligand>
        <name>Na(+)</name>
        <dbReference type="ChEBI" id="CHEBI:29101"/>
    </ligand>
</feature>
<feature type="binding site" evidence="1">
    <location>
        <position position="168"/>
    </location>
    <ligand>
        <name>Na(+)</name>
        <dbReference type="ChEBI" id="CHEBI:29101"/>
    </ligand>
</feature>
<sequence length="178" mass="19143">MEQFHGTTIVSVRRGDKVALGGDGQVTLGNIVMKGGARKVRRIYNNQVLVGFAGGTADAFSLLDRFEAKLEKHQGNLTRAAVELAKDWRTDRMLRRLEAMLIAADATTTLVITGNGDVLDPEGGICAIGSGGAYAQAAARALAENTELSPREIVEKSLEIAGDMCIYTNHNRIIETIE</sequence>
<accession>Q0BAX9</accession>
<name>HSLV_BURCM</name>
<evidence type="ECO:0000255" key="1">
    <source>
        <dbReference type="HAMAP-Rule" id="MF_00248"/>
    </source>
</evidence>